<comment type="function">
    <text evidence="1">Catalytic subunit of DNA primase, an RNA polymerase that catalyzes the synthesis of short RNA molecules used as primers for DNA polymerase during DNA replication. The small subunit contains the primase catalytic core and has DNA synthesis activity on its own. Binding to the large subunit stabilizes and modulates the activity, increasing the rate of DNA synthesis while decreasing the length of the DNA fragments, and conferring RNA synthesis capability. The DNA polymerase activity may enable DNA primase to also catalyze primer extension after primer synthesis. May also play a role in DNA repair.</text>
</comment>
<comment type="cofactor">
    <cofactor evidence="1">
        <name>Mg(2+)</name>
        <dbReference type="ChEBI" id="CHEBI:18420"/>
    </cofactor>
    <cofactor evidence="1">
        <name>Mn(2+)</name>
        <dbReference type="ChEBI" id="CHEBI:29035"/>
    </cofactor>
</comment>
<comment type="subunit">
    <text evidence="1">Heterodimer of a small subunit (PriS) and a large subunit (PriL).</text>
</comment>
<comment type="similarity">
    <text evidence="1">Belongs to the eukaryotic-type primase small subunit family.</text>
</comment>
<keyword id="KW-0235">DNA replication</keyword>
<keyword id="KW-0240">DNA-directed RNA polymerase</keyword>
<keyword id="KW-0460">Magnesium</keyword>
<keyword id="KW-0464">Manganese</keyword>
<keyword id="KW-0479">Metal-binding</keyword>
<keyword id="KW-0548">Nucleotidyltransferase</keyword>
<keyword id="KW-0639">Primosome</keyword>
<keyword id="KW-0804">Transcription</keyword>
<keyword id="KW-0808">Transferase</keyword>
<dbReference type="EC" id="2.7.7.-" evidence="1"/>
<dbReference type="EMBL" id="AE017261">
    <property type="protein sequence ID" value="AAT43387.1"/>
    <property type="molecule type" value="Genomic_DNA"/>
</dbReference>
<dbReference type="RefSeq" id="WP_011177603.1">
    <property type="nucleotide sequence ID" value="NC_005877.1"/>
</dbReference>
<dbReference type="SMR" id="Q6L0W5"/>
<dbReference type="STRING" id="263820.PTO0802"/>
<dbReference type="PaxDb" id="263820-PTO0802"/>
<dbReference type="GeneID" id="2844074"/>
<dbReference type="KEGG" id="pto:PTO0802"/>
<dbReference type="PATRIC" id="fig|263820.9.peg.837"/>
<dbReference type="eggNOG" id="arCOG04110">
    <property type="taxonomic scope" value="Archaea"/>
</dbReference>
<dbReference type="HOGENOM" id="CLU_056123_1_0_2"/>
<dbReference type="InParanoid" id="Q6L0W5"/>
<dbReference type="OrthoDB" id="31125at2157"/>
<dbReference type="Proteomes" id="UP000000438">
    <property type="component" value="Chromosome"/>
</dbReference>
<dbReference type="GO" id="GO:0000428">
    <property type="term" value="C:DNA-directed RNA polymerase complex"/>
    <property type="evidence" value="ECO:0007669"/>
    <property type="project" value="UniProtKB-KW"/>
</dbReference>
<dbReference type="GO" id="GO:1990077">
    <property type="term" value="C:primosome complex"/>
    <property type="evidence" value="ECO:0007669"/>
    <property type="project" value="UniProtKB-KW"/>
</dbReference>
<dbReference type="GO" id="GO:0003899">
    <property type="term" value="F:DNA-directed RNA polymerase activity"/>
    <property type="evidence" value="ECO:0007669"/>
    <property type="project" value="InterPro"/>
</dbReference>
<dbReference type="GO" id="GO:0046872">
    <property type="term" value="F:metal ion binding"/>
    <property type="evidence" value="ECO:0007669"/>
    <property type="project" value="UniProtKB-KW"/>
</dbReference>
<dbReference type="GO" id="GO:0006269">
    <property type="term" value="P:DNA replication, synthesis of primer"/>
    <property type="evidence" value="ECO:0007669"/>
    <property type="project" value="UniProtKB-UniRule"/>
</dbReference>
<dbReference type="CDD" id="cd04860">
    <property type="entry name" value="AE_Prim_S"/>
    <property type="match status" value="1"/>
</dbReference>
<dbReference type="Gene3D" id="3.90.920.10">
    <property type="entry name" value="DNA primase, PRIM domain"/>
    <property type="match status" value="1"/>
</dbReference>
<dbReference type="HAMAP" id="MF_00700">
    <property type="entry name" value="DNA_primase_sml_arc"/>
    <property type="match status" value="1"/>
</dbReference>
<dbReference type="InterPro" id="IPR002755">
    <property type="entry name" value="DNA_primase_S"/>
</dbReference>
<dbReference type="InterPro" id="IPR014052">
    <property type="entry name" value="DNA_primase_ssu_euk/arc"/>
</dbReference>
<dbReference type="InterPro" id="IPR023639">
    <property type="entry name" value="DNA_primase_ssu_PriS"/>
</dbReference>
<dbReference type="NCBIfam" id="TIGR00335">
    <property type="entry name" value="primase_sml"/>
    <property type="match status" value="1"/>
</dbReference>
<dbReference type="NCBIfam" id="NF001641">
    <property type="entry name" value="PRK00419.1-3"/>
    <property type="match status" value="1"/>
</dbReference>
<dbReference type="PANTHER" id="PTHR10536">
    <property type="entry name" value="DNA PRIMASE SMALL SUBUNIT"/>
    <property type="match status" value="1"/>
</dbReference>
<dbReference type="Pfam" id="PF01896">
    <property type="entry name" value="DNA_primase_S"/>
    <property type="match status" value="1"/>
</dbReference>
<dbReference type="SUPFAM" id="SSF56747">
    <property type="entry name" value="Prim-pol domain"/>
    <property type="match status" value="1"/>
</dbReference>
<protein>
    <recommendedName>
        <fullName evidence="1">DNA primase small subunit PriS</fullName>
        <ecNumber evidence="1">2.7.7.-</ecNumber>
    </recommendedName>
</protein>
<gene>
    <name evidence="1" type="primary">priS</name>
    <name type="synonym">priA</name>
    <name type="ordered locus">PTO0802</name>
</gene>
<reference key="1">
    <citation type="journal article" date="2004" name="Proc. Natl. Acad. Sci. U.S.A.">
        <title>Genome sequence of Picrophilus torridus and its implications for life around pH 0.</title>
        <authorList>
            <person name="Fuetterer O."/>
            <person name="Angelov A."/>
            <person name="Liesegang H."/>
            <person name="Gottschalk G."/>
            <person name="Schleper C."/>
            <person name="Schepers B."/>
            <person name="Dock C."/>
            <person name="Antranikian G."/>
            <person name="Liebl W."/>
        </authorList>
    </citation>
    <scope>NUCLEOTIDE SEQUENCE [LARGE SCALE GENOMIC DNA]</scope>
    <source>
        <strain>ATCC 700027 / DSM 9790 / JCM 10055 / NBRC 100828 / KAW 2/3</strain>
    </source>
</reference>
<organism>
    <name type="scientific">Picrophilus torridus (strain ATCC 700027 / DSM 9790 / JCM 10055 / NBRC 100828 / KAW 2/3)</name>
    <dbReference type="NCBI Taxonomy" id="1122961"/>
    <lineage>
        <taxon>Archaea</taxon>
        <taxon>Methanobacteriati</taxon>
        <taxon>Thermoplasmatota</taxon>
        <taxon>Thermoplasmata</taxon>
        <taxon>Thermoplasmatales</taxon>
        <taxon>Picrophilaceae</taxon>
        <taxon>Picrophilus</taxon>
    </lineage>
</organism>
<evidence type="ECO:0000255" key="1">
    <source>
        <dbReference type="HAMAP-Rule" id="MF_00700"/>
    </source>
</evidence>
<accession>Q6L0W5</accession>
<name>PRIS_PICTO</name>
<proteinExistence type="inferred from homology"/>
<sequence>MISYDKSLNYFSLYYRSNHLIMPDLISKREIGYIPFSGTMIRHLSFRNHREIESFVKRNTPRHLYYSSAYYIKPDEKRMEKKIWEGAELIFDLDADHIPGSDKMTYEEILLEVKKHVSRLLNYLINDFGFDDDSIKLYFSGGRGYHVHVVSDRVYSLDSDARREIGNYIKMEDFTIDNIIRASREKPESGPLKRFNEYISEIYSDENYLKRFYNGDFDRYYKSLDVYKDGKKKIDIMRENNYEKFKIVSKRDLDVLNNILNDFKDKYSAEIDEPVTTDVHRLIRFPGSLHGKTGLAVTPVNINEFDNFDPLISAVPEVFKDKYEHVYLNSDYMITMMNEKFSLNAGENKVPLYLALFLTGMKIGNFIEKK</sequence>
<feature type="chain" id="PRO_0000046747" description="DNA primase small subunit PriS">
    <location>
        <begin position="1"/>
        <end position="370"/>
    </location>
</feature>
<feature type="active site" evidence="1">
    <location>
        <position position="92"/>
    </location>
</feature>
<feature type="active site" evidence="1">
    <location>
        <position position="94"/>
    </location>
</feature>
<feature type="active site" evidence="1">
    <location>
        <position position="272"/>
    </location>
</feature>